<protein>
    <recommendedName>
        <fullName evidence="1">Fructose-bisphosphate aldolase class 1</fullName>
        <ecNumber evidence="1">4.1.2.13</ecNumber>
    </recommendedName>
    <alternativeName>
        <fullName>Fructose-bisphosphate aldolase class I</fullName>
        <shortName evidence="1">FBP aldolase</shortName>
    </alternativeName>
</protein>
<reference key="1">
    <citation type="book" date="2006" name="Gram positive pathogens, 2nd edition">
        <title>The Staphylococcus aureus NCTC 8325 genome.</title>
        <editorList>
            <person name="Fischetti V."/>
            <person name="Novick R."/>
            <person name="Ferretti J."/>
            <person name="Portnoy D."/>
            <person name="Rood J."/>
        </editorList>
        <authorList>
            <person name="Gillaspy A.F."/>
            <person name="Worrell V."/>
            <person name="Orvis J."/>
            <person name="Roe B.A."/>
            <person name="Dyer D.W."/>
            <person name="Iandolo J.J."/>
        </authorList>
    </citation>
    <scope>NUCLEOTIDE SEQUENCE [LARGE SCALE GENOMIC DNA]</scope>
    <source>
        <strain>NCTC 8325 / PS 47</strain>
    </source>
</reference>
<feature type="chain" id="PRO_1000045918" description="Fructose-bisphosphate aldolase class 1">
    <location>
        <begin position="1"/>
        <end position="296"/>
    </location>
</feature>
<feature type="active site" description="Proton acceptor" evidence="1">
    <location>
        <position position="175"/>
    </location>
</feature>
<feature type="active site" description="Schiff-base intermediate with dihydroxyacetone-P" evidence="1">
    <location>
        <position position="212"/>
    </location>
</feature>
<accession>Q2FV17</accession>
<sequence>MNKEQLEKMKNGKGFIAALDQSGGSTPKALKEYGVNEDQYSNEDEMFQLVHDMRTRVVTSPSFSPDKILGAILFEQTMDREVESKYTADYLADKGVVPFLKVDKGLAEEQNGVQLMKPIDNLDNLLDRANERHIFGTKMRSNILELNEQGIKDVVEQQFEVAKQIIAKGLVPIIEPEVNINAKDKAEIEKVLKAELKKGLDSLNADQLVMLKLTIPTEPNLYKELAEHPNVVRVVVLSGGYSREKANELLKDNAELIASFSRALASDLRADQSKEEFDKALGDAVESIYDASVNKN</sequence>
<name>ALF1_STAA8</name>
<keyword id="KW-0324">Glycolysis</keyword>
<keyword id="KW-0456">Lyase</keyword>
<keyword id="KW-1185">Reference proteome</keyword>
<keyword id="KW-0704">Schiff base</keyword>
<comment type="catalytic activity">
    <reaction evidence="1">
        <text>beta-D-fructose 1,6-bisphosphate = D-glyceraldehyde 3-phosphate + dihydroxyacetone phosphate</text>
        <dbReference type="Rhea" id="RHEA:14729"/>
        <dbReference type="ChEBI" id="CHEBI:32966"/>
        <dbReference type="ChEBI" id="CHEBI:57642"/>
        <dbReference type="ChEBI" id="CHEBI:59776"/>
        <dbReference type="EC" id="4.1.2.13"/>
    </reaction>
</comment>
<comment type="pathway">
    <text evidence="1">Carbohydrate degradation; glycolysis; D-glyceraldehyde 3-phosphate and glycerone phosphate from D-glucose: step 4/4.</text>
</comment>
<comment type="similarity">
    <text evidence="1">Belongs to the class I fructose-bisphosphate aldolase family.</text>
</comment>
<evidence type="ECO:0000255" key="1">
    <source>
        <dbReference type="HAMAP-Rule" id="MF_00729"/>
    </source>
</evidence>
<organism>
    <name type="scientific">Staphylococcus aureus (strain NCTC 8325 / PS 47)</name>
    <dbReference type="NCBI Taxonomy" id="93061"/>
    <lineage>
        <taxon>Bacteria</taxon>
        <taxon>Bacillati</taxon>
        <taxon>Bacillota</taxon>
        <taxon>Bacilli</taxon>
        <taxon>Bacillales</taxon>
        <taxon>Staphylococcaceae</taxon>
        <taxon>Staphylococcus</taxon>
    </lineage>
</organism>
<proteinExistence type="inferred from homology"/>
<gene>
    <name evidence="1" type="primary">fda</name>
    <name type="ordered locus">SAOUHSC_02926</name>
</gene>
<dbReference type="EC" id="4.1.2.13" evidence="1"/>
<dbReference type="EMBL" id="CP000253">
    <property type="protein sequence ID" value="ABD31921.1"/>
    <property type="molecule type" value="Genomic_DNA"/>
</dbReference>
<dbReference type="RefSeq" id="WP_001031413.1">
    <property type="nucleotide sequence ID" value="NZ_LS483365.1"/>
</dbReference>
<dbReference type="RefSeq" id="YP_501379.1">
    <property type="nucleotide sequence ID" value="NC_007795.1"/>
</dbReference>
<dbReference type="SMR" id="Q2FV17"/>
<dbReference type="STRING" id="93061.SAOUHSC_02926"/>
<dbReference type="PaxDb" id="1280-SAXN108_2876"/>
<dbReference type="GeneID" id="3921377"/>
<dbReference type="KEGG" id="sao:SAOUHSC_02926"/>
<dbReference type="PATRIC" id="fig|93061.5.peg.2645"/>
<dbReference type="eggNOG" id="COG3588">
    <property type="taxonomic scope" value="Bacteria"/>
</dbReference>
<dbReference type="HOGENOM" id="CLU_081560_0_0_9"/>
<dbReference type="OrthoDB" id="9813469at2"/>
<dbReference type="UniPathway" id="UPA00109">
    <property type="reaction ID" value="UER00183"/>
</dbReference>
<dbReference type="PRO" id="PR:Q2FV17"/>
<dbReference type="Proteomes" id="UP000008816">
    <property type="component" value="Chromosome"/>
</dbReference>
<dbReference type="GO" id="GO:0004332">
    <property type="term" value="F:fructose-bisphosphate aldolase activity"/>
    <property type="evidence" value="ECO:0007669"/>
    <property type="project" value="UniProtKB-UniRule"/>
</dbReference>
<dbReference type="GO" id="GO:0006096">
    <property type="term" value="P:glycolytic process"/>
    <property type="evidence" value="ECO:0007669"/>
    <property type="project" value="UniProtKB-UniRule"/>
</dbReference>
<dbReference type="Gene3D" id="3.20.20.70">
    <property type="entry name" value="Aldolase class I"/>
    <property type="match status" value="1"/>
</dbReference>
<dbReference type="HAMAP" id="MF_00729">
    <property type="entry name" value="FBP_aldolase_1"/>
    <property type="match status" value="1"/>
</dbReference>
<dbReference type="InterPro" id="IPR013785">
    <property type="entry name" value="Aldolase_TIM"/>
</dbReference>
<dbReference type="InterPro" id="IPR000741">
    <property type="entry name" value="FBA_I"/>
</dbReference>
<dbReference type="InterPro" id="IPR023014">
    <property type="entry name" value="FBA_I_Gram+-type"/>
</dbReference>
<dbReference type="NCBIfam" id="NF003784">
    <property type="entry name" value="PRK05377.1"/>
    <property type="match status" value="1"/>
</dbReference>
<dbReference type="PANTHER" id="PTHR11627">
    <property type="entry name" value="FRUCTOSE-BISPHOSPHATE ALDOLASE"/>
    <property type="match status" value="1"/>
</dbReference>
<dbReference type="Pfam" id="PF00274">
    <property type="entry name" value="Glycolytic"/>
    <property type="match status" value="1"/>
</dbReference>
<dbReference type="SUPFAM" id="SSF51569">
    <property type="entry name" value="Aldolase"/>
    <property type="match status" value="1"/>
</dbReference>